<protein>
    <recommendedName>
        <fullName evidence="1">Protein PsbN</fullName>
    </recommendedName>
</protein>
<evidence type="ECO:0000255" key="1">
    <source>
        <dbReference type="HAMAP-Rule" id="MF_00293"/>
    </source>
</evidence>
<sequence length="43" mass="4662">METATLVAISISGLLVSFTGYALYTAFGQPSQQLRDPFEEHGD</sequence>
<reference key="1">
    <citation type="journal article" date="1995" name="J. Mol. Biol.">
        <title>Complete sequence of the maize chloroplast genome: gene content, hotspots of divergence and fine tuning of genetic information by transcript editing.</title>
        <authorList>
            <person name="Maier R.M."/>
            <person name="Neckermann K."/>
            <person name="Igloi G.L."/>
            <person name="Koessel H."/>
        </authorList>
    </citation>
    <scope>NUCLEOTIDE SEQUENCE [LARGE SCALE GENOMIC DNA]</scope>
    <source>
        <strain>cv. B73</strain>
    </source>
</reference>
<feature type="chain" id="PRO_0000207921" description="Protein PsbN">
    <location>
        <begin position="1"/>
        <end position="43"/>
    </location>
</feature>
<feature type="transmembrane region" description="Helical" evidence="1">
    <location>
        <begin position="5"/>
        <end position="27"/>
    </location>
</feature>
<organism>
    <name type="scientific">Zea mays</name>
    <name type="common">Maize</name>
    <dbReference type="NCBI Taxonomy" id="4577"/>
    <lineage>
        <taxon>Eukaryota</taxon>
        <taxon>Viridiplantae</taxon>
        <taxon>Streptophyta</taxon>
        <taxon>Embryophyta</taxon>
        <taxon>Tracheophyta</taxon>
        <taxon>Spermatophyta</taxon>
        <taxon>Magnoliopsida</taxon>
        <taxon>Liliopsida</taxon>
        <taxon>Poales</taxon>
        <taxon>Poaceae</taxon>
        <taxon>PACMAD clade</taxon>
        <taxon>Panicoideae</taxon>
        <taxon>Andropogonodae</taxon>
        <taxon>Andropogoneae</taxon>
        <taxon>Tripsacinae</taxon>
        <taxon>Zea</taxon>
    </lineage>
</organism>
<comment type="function">
    <text evidence="1">May play a role in photosystem I and II biogenesis.</text>
</comment>
<comment type="subcellular location">
    <subcellularLocation>
        <location evidence="1">Plastid</location>
        <location evidence="1">Chloroplast thylakoid membrane</location>
        <topology evidence="1">Single-pass membrane protein</topology>
    </subcellularLocation>
</comment>
<comment type="similarity">
    <text evidence="1">Belongs to the PsbN family.</text>
</comment>
<comment type="caution">
    <text evidence="1">Originally thought to be a component of PSII; based on experiments in Synechocystis, N.tabacum and barley, and its absence from PSII in T.elongatus and T.vulcanus, this is probably not true.</text>
</comment>
<accession>P68854</accession>
<accession>P12171</accession>
<name>PSBN_MAIZE</name>
<proteinExistence type="inferred from homology"/>
<dbReference type="EMBL" id="X86563">
    <property type="protein sequence ID" value="CAA60313.1"/>
    <property type="molecule type" value="Genomic_DNA"/>
</dbReference>
<dbReference type="PIR" id="S58579">
    <property type="entry name" value="S58579"/>
</dbReference>
<dbReference type="RefSeq" id="NP_043051.1">
    <property type="nucleotide sequence ID" value="NC_001666.2"/>
</dbReference>
<dbReference type="SMR" id="P68854"/>
<dbReference type="FunCoup" id="P68854">
    <property type="interactions" value="81"/>
</dbReference>
<dbReference type="STRING" id="4577.P68854"/>
<dbReference type="GeneID" id="845211"/>
<dbReference type="KEGG" id="zma:845211"/>
<dbReference type="MaizeGDB" id="118238"/>
<dbReference type="InParanoid" id="P68854"/>
<dbReference type="OrthoDB" id="1860403at2759"/>
<dbReference type="Proteomes" id="UP000007305">
    <property type="component" value="Chloroplast"/>
</dbReference>
<dbReference type="GO" id="GO:0009535">
    <property type="term" value="C:chloroplast thylakoid membrane"/>
    <property type="evidence" value="ECO:0007669"/>
    <property type="project" value="UniProtKB-SubCell"/>
</dbReference>
<dbReference type="GO" id="GO:0015979">
    <property type="term" value="P:photosynthesis"/>
    <property type="evidence" value="ECO:0007669"/>
    <property type="project" value="InterPro"/>
</dbReference>
<dbReference type="HAMAP" id="MF_00293">
    <property type="entry name" value="PSII_PsbN"/>
    <property type="match status" value="1"/>
</dbReference>
<dbReference type="InterPro" id="IPR003398">
    <property type="entry name" value="PSII_PsbN"/>
</dbReference>
<dbReference type="PANTHER" id="PTHR35326">
    <property type="entry name" value="PROTEIN PSBN"/>
    <property type="match status" value="1"/>
</dbReference>
<dbReference type="PANTHER" id="PTHR35326:SF3">
    <property type="entry name" value="PROTEIN PSBN"/>
    <property type="match status" value="1"/>
</dbReference>
<dbReference type="Pfam" id="PF02468">
    <property type="entry name" value="PsbN"/>
    <property type="match status" value="1"/>
</dbReference>
<geneLocation type="chloroplast"/>
<gene>
    <name evidence="1" type="primary">psbN</name>
</gene>
<keyword id="KW-0150">Chloroplast</keyword>
<keyword id="KW-0472">Membrane</keyword>
<keyword id="KW-0934">Plastid</keyword>
<keyword id="KW-1185">Reference proteome</keyword>
<keyword id="KW-0793">Thylakoid</keyword>
<keyword id="KW-0812">Transmembrane</keyword>
<keyword id="KW-1133">Transmembrane helix</keyword>